<feature type="chain" id="PRO_0000110020" description="UDP-4-amino-4-deoxy-L-arabinose--oxoglutarate aminotransferase">
    <location>
        <begin position="1"/>
        <end position="379"/>
    </location>
</feature>
<feature type="modified residue" description="N6-(pyridoxal phosphate)lysine" evidence="1">
    <location>
        <position position="182"/>
    </location>
</feature>
<dbReference type="EC" id="2.6.1.87" evidence="1"/>
<dbReference type="EMBL" id="AE005174">
    <property type="protein sequence ID" value="AAG57384.1"/>
    <property type="status" value="ALT_INIT"/>
    <property type="molecule type" value="Genomic_DNA"/>
</dbReference>
<dbReference type="EMBL" id="BA000007">
    <property type="protein sequence ID" value="BAB36564.1"/>
    <property type="status" value="ALT_INIT"/>
    <property type="molecule type" value="Genomic_DNA"/>
</dbReference>
<dbReference type="PIR" id="D85865">
    <property type="entry name" value="D85865"/>
</dbReference>
<dbReference type="PIR" id="E91021">
    <property type="entry name" value="E91021"/>
</dbReference>
<dbReference type="RefSeq" id="NP_311168.3">
    <property type="nucleotide sequence ID" value="NC_002695.1"/>
</dbReference>
<dbReference type="RefSeq" id="WP_001303599.1">
    <property type="nucleotide sequence ID" value="NZ_VOAI01000001.1"/>
</dbReference>
<dbReference type="SMR" id="Q7AC24"/>
<dbReference type="STRING" id="155864.Z3511"/>
<dbReference type="GeneID" id="916849"/>
<dbReference type="KEGG" id="ece:Z3511"/>
<dbReference type="KEGG" id="ecs:ECs_3141"/>
<dbReference type="PATRIC" id="fig|386585.9.peg.3277"/>
<dbReference type="eggNOG" id="COG0399">
    <property type="taxonomic scope" value="Bacteria"/>
</dbReference>
<dbReference type="HOGENOM" id="CLU_033332_0_3_6"/>
<dbReference type="OMA" id="RRGVMNI"/>
<dbReference type="UniPathway" id="UPA00030"/>
<dbReference type="UniPathway" id="UPA00032">
    <property type="reaction ID" value="UER00493"/>
</dbReference>
<dbReference type="Proteomes" id="UP000000558">
    <property type="component" value="Chromosome"/>
</dbReference>
<dbReference type="Proteomes" id="UP000002519">
    <property type="component" value="Chromosome"/>
</dbReference>
<dbReference type="GO" id="GO:0016020">
    <property type="term" value="C:membrane"/>
    <property type="evidence" value="ECO:0007669"/>
    <property type="project" value="GOC"/>
</dbReference>
<dbReference type="GO" id="GO:0030170">
    <property type="term" value="F:pyridoxal phosphate binding"/>
    <property type="evidence" value="ECO:0007669"/>
    <property type="project" value="TreeGrafter"/>
</dbReference>
<dbReference type="GO" id="GO:0099620">
    <property type="term" value="F:UDP-4-amino-4-deoxy-L-arabinose aminotransferase"/>
    <property type="evidence" value="ECO:0007669"/>
    <property type="project" value="UniProtKB-EC"/>
</dbReference>
<dbReference type="GO" id="GO:0009245">
    <property type="term" value="P:lipid A biosynthetic process"/>
    <property type="evidence" value="ECO:0007669"/>
    <property type="project" value="UniProtKB-KW"/>
</dbReference>
<dbReference type="GO" id="GO:0009103">
    <property type="term" value="P:lipopolysaccharide biosynthetic process"/>
    <property type="evidence" value="ECO:0007669"/>
    <property type="project" value="UniProtKB-UniRule"/>
</dbReference>
<dbReference type="GO" id="GO:0046677">
    <property type="term" value="P:response to antibiotic"/>
    <property type="evidence" value="ECO:0007669"/>
    <property type="project" value="UniProtKB-KW"/>
</dbReference>
<dbReference type="CDD" id="cd00616">
    <property type="entry name" value="AHBA_syn"/>
    <property type="match status" value="1"/>
</dbReference>
<dbReference type="FunFam" id="3.40.640.10:FF:000040">
    <property type="entry name" value="UDP-4-amino-4-deoxy-L-arabinose--oxoglutarate aminotransferase"/>
    <property type="match status" value="1"/>
</dbReference>
<dbReference type="FunFam" id="3.90.1150.10:FF:000030">
    <property type="entry name" value="UDP-4-amino-4-deoxy-L-arabinose--oxoglutarate aminotransferase"/>
    <property type="match status" value="1"/>
</dbReference>
<dbReference type="Gene3D" id="3.90.1150.10">
    <property type="entry name" value="Aspartate Aminotransferase, domain 1"/>
    <property type="match status" value="1"/>
</dbReference>
<dbReference type="Gene3D" id="3.40.640.10">
    <property type="entry name" value="Type I PLP-dependent aspartate aminotransferase-like (Major domain)"/>
    <property type="match status" value="1"/>
</dbReference>
<dbReference type="HAMAP" id="MF_01167">
    <property type="entry name" value="ArnB_transfer"/>
    <property type="match status" value="1"/>
</dbReference>
<dbReference type="InterPro" id="IPR022850">
    <property type="entry name" value="ArnB_NH2Trfase"/>
</dbReference>
<dbReference type="InterPro" id="IPR000653">
    <property type="entry name" value="DegT/StrS_aminotransferase"/>
</dbReference>
<dbReference type="InterPro" id="IPR015424">
    <property type="entry name" value="PyrdxlP-dep_Trfase"/>
</dbReference>
<dbReference type="InterPro" id="IPR015421">
    <property type="entry name" value="PyrdxlP-dep_Trfase_major"/>
</dbReference>
<dbReference type="InterPro" id="IPR015422">
    <property type="entry name" value="PyrdxlP-dep_Trfase_small"/>
</dbReference>
<dbReference type="NCBIfam" id="NF008658">
    <property type="entry name" value="PRK11658.1"/>
    <property type="match status" value="1"/>
</dbReference>
<dbReference type="PANTHER" id="PTHR30244">
    <property type="entry name" value="TRANSAMINASE"/>
    <property type="match status" value="1"/>
</dbReference>
<dbReference type="PANTHER" id="PTHR30244:SF41">
    <property type="entry name" value="UDP-4-AMINO-4-DEOXY-L-ARABINOSE--OXOGLUTARATE AMINOTRANSFERASE"/>
    <property type="match status" value="1"/>
</dbReference>
<dbReference type="Pfam" id="PF01041">
    <property type="entry name" value="DegT_DnrJ_EryC1"/>
    <property type="match status" value="1"/>
</dbReference>
<dbReference type="PIRSF" id="PIRSF000390">
    <property type="entry name" value="PLP_StrS"/>
    <property type="match status" value="1"/>
</dbReference>
<dbReference type="SUPFAM" id="SSF53383">
    <property type="entry name" value="PLP-dependent transferases"/>
    <property type="match status" value="1"/>
</dbReference>
<proteinExistence type="inferred from homology"/>
<accession>Q7AC24</accession>
<accession>Q8X599</accession>
<sequence length="379" mass="41651">MSEFLPFSRPAMGVEELAAVKEVLESGWITTGPKNHALEQAFCQLTGNQHAIAVSSATAGMHITLMALEIGKGDEVITPSLTWVSTLNMISLQGATPVMVDVDRDTLMVTPEAIESAITPRTKAIIPVHYAGAPADINAIRAIGERYGIAVIEDAAHAVGTYYKGRHIGAKGTAIFSFHAIKNITCAEGGLIVTDNENIARQLRMLKFHGLGVDAYDRQTWGRAPQAEVLTPGYKYNLTDINAAIALTQLAKLEHLNTRRREIAQQYQQALAALPFQPLSLPAWPHVHAWHLFIIRVDEQRCGISRDALMEALKERGIGTGLHFRAAHTQKYYRERFPSLSLPNTEWNSERICSLPLFPDMTTADADRVITALQQLAGQ</sequence>
<evidence type="ECO:0000255" key="1">
    <source>
        <dbReference type="HAMAP-Rule" id="MF_01167"/>
    </source>
</evidence>
<evidence type="ECO:0000305" key="2"/>
<comment type="function">
    <text evidence="1">Catalyzes the conversion of UDP-4-keto-arabinose (UDP-Ara4O) to UDP-4-amino-4-deoxy-L-arabinose (UDP-L-Ara4N). The modified arabinose is attached to lipid A and is required for resistance to polymyxin and cationic antimicrobial peptides.</text>
</comment>
<comment type="catalytic activity">
    <reaction evidence="1">
        <text>UDP-4-amino-4-deoxy-beta-L-arabinose + 2-oxoglutarate = UDP-beta-L-threo-pentopyranos-4-ulose + L-glutamate</text>
        <dbReference type="Rhea" id="RHEA:24710"/>
        <dbReference type="ChEBI" id="CHEBI:16810"/>
        <dbReference type="ChEBI" id="CHEBI:29985"/>
        <dbReference type="ChEBI" id="CHEBI:58708"/>
        <dbReference type="ChEBI" id="CHEBI:58710"/>
        <dbReference type="EC" id="2.6.1.87"/>
    </reaction>
</comment>
<comment type="cofactor">
    <cofactor evidence="1">
        <name>pyridoxal 5'-phosphate</name>
        <dbReference type="ChEBI" id="CHEBI:597326"/>
    </cofactor>
</comment>
<comment type="pathway">
    <text evidence="1">Nucleotide-sugar biosynthesis; UDP-4-deoxy-4-formamido-beta-L-arabinose biosynthesis; UDP-4-deoxy-4-formamido-beta-L-arabinose from UDP-alpha-D-glucuronate: step 2/3.</text>
</comment>
<comment type="pathway">
    <text evidence="1">Bacterial outer membrane biogenesis; lipopolysaccharide biosynthesis.</text>
</comment>
<comment type="subunit">
    <text evidence="1">Homodimer.</text>
</comment>
<comment type="similarity">
    <text evidence="1">Belongs to the DegT/DnrJ/EryC1 family. ArnB subfamily.</text>
</comment>
<comment type="sequence caution" evidence="2">
    <conflict type="erroneous initiation">
        <sequence resource="EMBL-CDS" id="AAG57384"/>
    </conflict>
</comment>
<comment type="sequence caution" evidence="2">
    <conflict type="erroneous initiation">
        <sequence resource="EMBL-CDS" id="BAB36564"/>
    </conflict>
</comment>
<name>ARNB_ECO57</name>
<organism>
    <name type="scientific">Escherichia coli O157:H7</name>
    <dbReference type="NCBI Taxonomy" id="83334"/>
    <lineage>
        <taxon>Bacteria</taxon>
        <taxon>Pseudomonadati</taxon>
        <taxon>Pseudomonadota</taxon>
        <taxon>Gammaproteobacteria</taxon>
        <taxon>Enterobacterales</taxon>
        <taxon>Enterobacteriaceae</taxon>
        <taxon>Escherichia</taxon>
    </lineage>
</organism>
<reference key="1">
    <citation type="journal article" date="2001" name="Nature">
        <title>Genome sequence of enterohaemorrhagic Escherichia coli O157:H7.</title>
        <authorList>
            <person name="Perna N.T."/>
            <person name="Plunkett G. III"/>
            <person name="Burland V."/>
            <person name="Mau B."/>
            <person name="Glasner J.D."/>
            <person name="Rose D.J."/>
            <person name="Mayhew G.F."/>
            <person name="Evans P.S."/>
            <person name="Gregor J."/>
            <person name="Kirkpatrick H.A."/>
            <person name="Posfai G."/>
            <person name="Hackett J."/>
            <person name="Klink S."/>
            <person name="Boutin A."/>
            <person name="Shao Y."/>
            <person name="Miller L."/>
            <person name="Grotbeck E.J."/>
            <person name="Davis N.W."/>
            <person name="Lim A."/>
            <person name="Dimalanta E.T."/>
            <person name="Potamousis K."/>
            <person name="Apodaca J."/>
            <person name="Anantharaman T.S."/>
            <person name="Lin J."/>
            <person name="Yen G."/>
            <person name="Schwartz D.C."/>
            <person name="Welch R.A."/>
            <person name="Blattner F.R."/>
        </authorList>
    </citation>
    <scope>NUCLEOTIDE SEQUENCE [LARGE SCALE GENOMIC DNA]</scope>
    <source>
        <strain>O157:H7 / EDL933 / ATCC 700927 / EHEC</strain>
    </source>
</reference>
<reference key="2">
    <citation type="journal article" date="2001" name="DNA Res.">
        <title>Complete genome sequence of enterohemorrhagic Escherichia coli O157:H7 and genomic comparison with a laboratory strain K-12.</title>
        <authorList>
            <person name="Hayashi T."/>
            <person name="Makino K."/>
            <person name="Ohnishi M."/>
            <person name="Kurokawa K."/>
            <person name="Ishii K."/>
            <person name="Yokoyama K."/>
            <person name="Han C.-G."/>
            <person name="Ohtsubo E."/>
            <person name="Nakayama K."/>
            <person name="Murata T."/>
            <person name="Tanaka M."/>
            <person name="Tobe T."/>
            <person name="Iida T."/>
            <person name="Takami H."/>
            <person name="Honda T."/>
            <person name="Sasakawa C."/>
            <person name="Ogasawara N."/>
            <person name="Yasunaga T."/>
            <person name="Kuhara S."/>
            <person name="Shiba T."/>
            <person name="Hattori M."/>
            <person name="Shinagawa H."/>
        </authorList>
    </citation>
    <scope>NUCLEOTIDE SEQUENCE [LARGE SCALE GENOMIC DNA]</scope>
    <source>
        <strain>O157:H7 / Sakai / RIMD 0509952 / EHEC</strain>
    </source>
</reference>
<protein>
    <recommendedName>
        <fullName evidence="1">UDP-4-amino-4-deoxy-L-arabinose--oxoglutarate aminotransferase</fullName>
        <ecNumber evidence="1">2.6.1.87</ecNumber>
    </recommendedName>
    <alternativeName>
        <fullName evidence="1">UDP-(beta-L-threo-pentapyranosyl-4''-ulose diphosphate) aminotransferase</fullName>
        <shortName evidence="1">UDP-Ara4O aminotransferase</shortName>
    </alternativeName>
    <alternativeName>
        <fullName evidence="1">UDP-4-amino-4-deoxy-L-arabinose aminotransferase</fullName>
    </alternativeName>
</protein>
<gene>
    <name evidence="1" type="primary">arnB</name>
    <name type="ordered locus">Z3511</name>
    <name type="ordered locus">ECs3141</name>
</gene>
<keyword id="KW-0032">Aminotransferase</keyword>
<keyword id="KW-0046">Antibiotic resistance</keyword>
<keyword id="KW-0441">Lipid A biosynthesis</keyword>
<keyword id="KW-0444">Lipid biosynthesis</keyword>
<keyword id="KW-0443">Lipid metabolism</keyword>
<keyword id="KW-0448">Lipopolysaccharide biosynthesis</keyword>
<keyword id="KW-0663">Pyridoxal phosphate</keyword>
<keyword id="KW-1185">Reference proteome</keyword>
<keyword id="KW-0808">Transferase</keyword>